<name>CPD_ARATH</name>
<comment type="function">
    <text evidence="1">Hydrolyzes ADP-ribose 1'',2''-cyclic phosphate (Appr&gt;1) that is produced during tRNA splicing into ADP-ribose 1''-phosphate (Appr-1''p) (PubMed:9148938). Also acts on nucleoside 2',3'-cyclic phosphates (PubMed:9148938).</text>
</comment>
<comment type="catalytic activity">
    <reaction evidence="1">
        <text>ADP-alpha-D-ribose 1'',2''-cyclic phosphate + H2O = ADP-alpha-D-ribose 1''-phosphate + H(+)</text>
        <dbReference type="Rhea" id="RHEA:72083"/>
        <dbReference type="ChEBI" id="CHEBI:15377"/>
        <dbReference type="ChEBI" id="CHEBI:15378"/>
        <dbReference type="ChEBI" id="CHEBI:58753"/>
        <dbReference type="ChEBI" id="CHEBI:76596"/>
    </reaction>
    <physiologicalReaction direction="left-to-right" evidence="1">
        <dbReference type="Rhea" id="RHEA:72084"/>
    </physiologicalReaction>
</comment>
<comment type="catalytic activity">
    <reaction evidence="1">
        <text>2',3'-cyclophospho-AMP + H2O = adenosine 2'-phosphate + H(+)</text>
        <dbReference type="Rhea" id="RHEA:37191"/>
        <dbReference type="ChEBI" id="CHEBI:15377"/>
        <dbReference type="ChEBI" id="CHEBI:15378"/>
        <dbReference type="ChEBI" id="CHEBI:60879"/>
        <dbReference type="ChEBI" id="CHEBI:77740"/>
        <dbReference type="EC" id="3.1.4.37"/>
    </reaction>
    <physiologicalReaction direction="left-to-right" evidence="1">
        <dbReference type="Rhea" id="RHEA:37192"/>
    </physiologicalReaction>
</comment>
<comment type="catalytic activity">
    <reaction evidence="1">
        <text>2',3'-cyclophospho-GMP + H2O = guanosine 2'-phosphate + H(+)</text>
        <dbReference type="Rhea" id="RHEA:37211"/>
        <dbReference type="ChEBI" id="CHEBI:15377"/>
        <dbReference type="ChEBI" id="CHEBI:15378"/>
        <dbReference type="ChEBI" id="CHEBI:60837"/>
        <dbReference type="ChEBI" id="CHEBI:74604"/>
        <dbReference type="EC" id="3.1.4.37"/>
    </reaction>
    <physiologicalReaction direction="left-to-right" evidence="1">
        <dbReference type="Rhea" id="RHEA:37212"/>
    </physiologicalReaction>
</comment>
<comment type="catalytic activity">
    <reaction evidence="1">
        <text>2',3'-cyclophospho-UMP + H2O = uridine 2'-phosphate + H(+)</text>
        <dbReference type="Rhea" id="RHEA:37239"/>
        <dbReference type="ChEBI" id="CHEBI:15377"/>
        <dbReference type="ChEBI" id="CHEBI:15378"/>
        <dbReference type="ChEBI" id="CHEBI:60873"/>
        <dbReference type="ChEBI" id="CHEBI:77802"/>
        <dbReference type="EC" id="3.1.4.37"/>
    </reaction>
    <physiologicalReaction direction="left-to-right" evidence="1">
        <dbReference type="Rhea" id="RHEA:37240"/>
    </physiologicalReaction>
</comment>
<comment type="catalytic activity">
    <reaction evidence="1">
        <text>2',3'-cyclophospho-CMP + H2O = cytidine 2'-phosphate + H(+)</text>
        <dbReference type="Rhea" id="RHEA:41956"/>
        <dbReference type="ChEBI" id="CHEBI:15377"/>
        <dbReference type="ChEBI" id="CHEBI:15378"/>
        <dbReference type="ChEBI" id="CHEBI:60877"/>
        <dbReference type="ChEBI" id="CHEBI:77766"/>
        <dbReference type="EC" id="3.1.4.37"/>
    </reaction>
    <physiologicalReaction direction="left-to-right" evidence="1">
        <dbReference type="Rhea" id="RHEA:41957"/>
    </physiologicalReaction>
</comment>
<comment type="activity regulation">
    <text evidence="1">Inhibited by Cu(2+) and Zn(2+) at 0.5 mM by 93 and 87% respectively (PubMed:9148938). Not inhibited by Ca(2+), Mg(2+), Co(2+), Ni(2+), and EDTA at 0.5 mM (PubMed:9148938).</text>
</comment>
<comment type="biophysicochemical properties">
    <kinetics>
        <KM evidence="1">1.35 mM for Appr&gt;p</KM>
        <KM evidence="1">1.34 mM for A&gt;p</KM>
        <KM evidence="1">2.38 mM for C&gt;p</KM>
        <KM evidence="1">16.86 mM for G&gt;p</KM>
        <KM evidence="1">17.67 mM for U&gt;p</KM>
        <Vmax evidence="1">25.0 umol/min/mg enzyme toward A&gt;p</Vmax>
        <Vmax evidence="1">37.0 umol/min/mg enzyme toward G&gt;p</Vmax>
        <Vmax evidence="1">79.0 umol/min/mg enzyme toward C&gt;p</Vmax>
        <Vmax evidence="1">47.0 umol/min/mg enzyme toward U&gt;p</Vmax>
        <Vmax evidence="1">16.0 umol/min/mg enzyme towardr Appr&gt;p</Vmax>
    </kinetics>
    <phDependence>
        <text evidence="1">Optimum pH is 7.0.</text>
    </phDependence>
</comment>
<comment type="subcellular location">
    <subcellularLocation>
        <location evidence="1">Cytoplasm</location>
    </subcellularLocation>
</comment>
<comment type="tissue specificity">
    <text evidence="1">Expressed in leaves, stems, roots, floral buds and germinating seeds.</text>
</comment>
<comment type="similarity">
    <text evidence="3">Belongs to the 2H phosphoesterase superfamily. CPD1 family.</text>
</comment>
<keyword id="KW-0002">3D-structure</keyword>
<keyword id="KW-0963">Cytoplasm</keyword>
<keyword id="KW-1015">Disulfide bond</keyword>
<keyword id="KW-0378">Hydrolase</keyword>
<keyword id="KW-1185">Reference proteome</keyword>
<proteinExistence type="evidence at protein level"/>
<organism>
    <name type="scientific">Arabidopsis thaliana</name>
    <name type="common">Mouse-ear cress</name>
    <dbReference type="NCBI Taxonomy" id="3702"/>
    <lineage>
        <taxon>Eukaryota</taxon>
        <taxon>Viridiplantae</taxon>
        <taxon>Streptophyta</taxon>
        <taxon>Embryophyta</taxon>
        <taxon>Tracheophyta</taxon>
        <taxon>Spermatophyta</taxon>
        <taxon>Magnoliopsida</taxon>
        <taxon>eudicotyledons</taxon>
        <taxon>Gunneridae</taxon>
        <taxon>Pentapetalae</taxon>
        <taxon>rosids</taxon>
        <taxon>malvids</taxon>
        <taxon>Brassicales</taxon>
        <taxon>Brassicaceae</taxon>
        <taxon>Camelineae</taxon>
        <taxon>Arabidopsis</taxon>
    </lineage>
</organism>
<sequence>MEEVKKDVYSVWALPDEESEPRFKKLMEALRSEFTGPRFVPHVTVAVSAYLTADEAKKMFESACDGLKAYTATVDRVSTGTFFFQCVFLLLQTTPEVMEAGEHCKNHFNCSTTTPYMPHLSLLYAELTEEEKKNAQEKAYTLDSSLDGLSFRLNRLALCKTDTEDKTLETWETVAVCNLNP</sequence>
<feature type="chain" id="PRO_0000079285" description="Cyclic phosphodiesterase">
    <location>
        <begin position="1"/>
        <end position="181"/>
    </location>
</feature>
<feature type="active site" description="Proton donor/acceptor">
    <location>
        <position position="42"/>
    </location>
</feature>
<feature type="active site" description="Proton donor/acceptor">
    <location>
        <position position="119"/>
    </location>
</feature>
<feature type="binding site">
    <location>
        <position position="44"/>
    </location>
    <ligand>
        <name>substrate</name>
    </ligand>
</feature>
<feature type="binding site">
    <location>
        <position position="121"/>
    </location>
    <ligand>
        <name>substrate</name>
    </ligand>
</feature>
<feature type="binding site">
    <location>
        <position position="124"/>
    </location>
    <ligand>
        <name>substrate</name>
    </ligand>
</feature>
<feature type="disulfide bond">
    <location>
        <begin position="64"/>
        <end position="177"/>
    </location>
</feature>
<feature type="disulfide bond">
    <location>
        <begin position="104"/>
        <end position="110"/>
    </location>
</feature>
<feature type="strand" evidence="5">
    <location>
        <begin position="7"/>
        <end position="15"/>
    </location>
</feature>
<feature type="turn" evidence="5">
    <location>
        <begin position="17"/>
        <end position="19"/>
    </location>
</feature>
<feature type="helix" evidence="5">
    <location>
        <begin position="20"/>
        <end position="34"/>
    </location>
</feature>
<feature type="strand" evidence="5">
    <location>
        <begin position="43"/>
        <end position="51"/>
    </location>
</feature>
<feature type="helix" evidence="5">
    <location>
        <begin position="53"/>
        <end position="65"/>
    </location>
</feature>
<feature type="strand" evidence="5">
    <location>
        <begin position="70"/>
        <end position="82"/>
    </location>
</feature>
<feature type="strand" evidence="5">
    <location>
        <begin position="85"/>
        <end position="91"/>
    </location>
</feature>
<feature type="helix" evidence="5">
    <location>
        <begin position="95"/>
        <end position="107"/>
    </location>
</feature>
<feature type="strand" evidence="5">
    <location>
        <begin position="119"/>
        <end position="123"/>
    </location>
</feature>
<feature type="helix" evidence="5">
    <location>
        <begin position="129"/>
        <end position="142"/>
    </location>
</feature>
<feature type="helix" evidence="4">
    <location>
        <begin position="144"/>
        <end position="146"/>
    </location>
</feature>
<feature type="strand" evidence="5">
    <location>
        <begin position="150"/>
        <end position="160"/>
    </location>
</feature>
<feature type="strand" evidence="5">
    <location>
        <begin position="172"/>
        <end position="178"/>
    </location>
</feature>
<reference key="1">
    <citation type="journal article" date="1997" name="J. Biol. Chem.">
        <title>Cloning and characterization of the Arabidopsis cyclic phosphodiesterase which hydrolyzes ADP-ribose 1'',2''-cyclic phosphate and nucleoside 2',3'-cyclic phosphates.</title>
        <authorList>
            <person name="Genschik P."/>
            <person name="Hall J."/>
            <person name="Filipowicz W."/>
        </authorList>
    </citation>
    <scope>NUCLEOTIDE SEQUENCE [MRNA]</scope>
    <scope>FUNCTION</scope>
    <scope>CATALYTIC ACTIVITY</scope>
    <scope>BIOPHYSICOCHEMICAL PROPERTIES</scope>
    <scope>ACTIVITY REGULATION</scope>
    <scope>SUBCELLULAR LOCATION</scope>
    <scope>TISSUE SPECIFICITY</scope>
    <source>
        <strain>cv. Columbia</strain>
        <tissue>Leaf</tissue>
    </source>
</reference>
<reference key="2">
    <citation type="journal article" date="1999" name="Nature">
        <title>Sequence and analysis of chromosome 4 of the plant Arabidopsis thaliana.</title>
        <authorList>
            <person name="Mayer K.F.X."/>
            <person name="Schueller C."/>
            <person name="Wambutt R."/>
            <person name="Murphy G."/>
            <person name="Volckaert G."/>
            <person name="Pohl T."/>
            <person name="Duesterhoeft A."/>
            <person name="Stiekema W."/>
            <person name="Entian K.-D."/>
            <person name="Terryn N."/>
            <person name="Harris B."/>
            <person name="Ansorge W."/>
            <person name="Brandt P."/>
            <person name="Grivell L.A."/>
            <person name="Rieger M."/>
            <person name="Weichselgartner M."/>
            <person name="de Simone V."/>
            <person name="Obermaier B."/>
            <person name="Mache R."/>
            <person name="Mueller M."/>
            <person name="Kreis M."/>
            <person name="Delseny M."/>
            <person name="Puigdomenech P."/>
            <person name="Watson M."/>
            <person name="Schmidtheini T."/>
            <person name="Reichert B."/>
            <person name="Portetelle D."/>
            <person name="Perez-Alonso M."/>
            <person name="Boutry M."/>
            <person name="Bancroft I."/>
            <person name="Vos P."/>
            <person name="Hoheisel J."/>
            <person name="Zimmermann W."/>
            <person name="Wedler H."/>
            <person name="Ridley P."/>
            <person name="Langham S.-A."/>
            <person name="McCullagh B."/>
            <person name="Bilham L."/>
            <person name="Robben J."/>
            <person name="van der Schueren J."/>
            <person name="Grymonprez B."/>
            <person name="Chuang Y.-J."/>
            <person name="Vandenbussche F."/>
            <person name="Braeken M."/>
            <person name="Weltjens I."/>
            <person name="Voet M."/>
            <person name="Bastiaens I."/>
            <person name="Aert R."/>
            <person name="Defoor E."/>
            <person name="Weitzenegger T."/>
            <person name="Bothe G."/>
            <person name="Ramsperger U."/>
            <person name="Hilbert H."/>
            <person name="Braun M."/>
            <person name="Holzer E."/>
            <person name="Brandt A."/>
            <person name="Peters S."/>
            <person name="van Staveren M."/>
            <person name="Dirkse W."/>
            <person name="Mooijman P."/>
            <person name="Klein Lankhorst R."/>
            <person name="Rose M."/>
            <person name="Hauf J."/>
            <person name="Koetter P."/>
            <person name="Berneiser S."/>
            <person name="Hempel S."/>
            <person name="Feldpausch M."/>
            <person name="Lamberth S."/>
            <person name="Van den Daele H."/>
            <person name="De Keyser A."/>
            <person name="Buysshaert C."/>
            <person name="Gielen J."/>
            <person name="Villarroel R."/>
            <person name="De Clercq R."/>
            <person name="van Montagu M."/>
            <person name="Rogers J."/>
            <person name="Cronin A."/>
            <person name="Quail M.A."/>
            <person name="Bray-Allen S."/>
            <person name="Clark L."/>
            <person name="Doggett J."/>
            <person name="Hall S."/>
            <person name="Kay M."/>
            <person name="Lennard N."/>
            <person name="McLay K."/>
            <person name="Mayes R."/>
            <person name="Pettett A."/>
            <person name="Rajandream M.A."/>
            <person name="Lyne M."/>
            <person name="Benes V."/>
            <person name="Rechmann S."/>
            <person name="Borkova D."/>
            <person name="Bloecker H."/>
            <person name="Scharfe M."/>
            <person name="Grimm M."/>
            <person name="Loehnert T.-H."/>
            <person name="Dose S."/>
            <person name="de Haan M."/>
            <person name="Maarse A.C."/>
            <person name="Schaefer M."/>
            <person name="Mueller-Auer S."/>
            <person name="Gabel C."/>
            <person name="Fuchs M."/>
            <person name="Fartmann B."/>
            <person name="Granderath K."/>
            <person name="Dauner D."/>
            <person name="Herzl A."/>
            <person name="Neumann S."/>
            <person name="Argiriou A."/>
            <person name="Vitale D."/>
            <person name="Liguori R."/>
            <person name="Piravandi E."/>
            <person name="Massenet O."/>
            <person name="Quigley F."/>
            <person name="Clabauld G."/>
            <person name="Muendlein A."/>
            <person name="Felber R."/>
            <person name="Schnabl S."/>
            <person name="Hiller R."/>
            <person name="Schmidt W."/>
            <person name="Lecharny A."/>
            <person name="Aubourg S."/>
            <person name="Chefdor F."/>
            <person name="Cooke R."/>
            <person name="Berger C."/>
            <person name="Monfort A."/>
            <person name="Casacuberta E."/>
            <person name="Gibbons T."/>
            <person name="Weber N."/>
            <person name="Vandenbol M."/>
            <person name="Bargues M."/>
            <person name="Terol J."/>
            <person name="Torres A."/>
            <person name="Perez-Perez A."/>
            <person name="Purnelle B."/>
            <person name="Bent E."/>
            <person name="Johnson S."/>
            <person name="Tacon D."/>
            <person name="Jesse T."/>
            <person name="Heijnen L."/>
            <person name="Schwarz S."/>
            <person name="Scholler P."/>
            <person name="Heber S."/>
            <person name="Francs P."/>
            <person name="Bielke C."/>
            <person name="Frishman D."/>
            <person name="Haase D."/>
            <person name="Lemcke K."/>
            <person name="Mewes H.-W."/>
            <person name="Stocker S."/>
            <person name="Zaccaria P."/>
            <person name="Bevan M."/>
            <person name="Wilson R.K."/>
            <person name="de la Bastide M."/>
            <person name="Habermann K."/>
            <person name="Parnell L."/>
            <person name="Dedhia N."/>
            <person name="Gnoj L."/>
            <person name="Schutz K."/>
            <person name="Huang E."/>
            <person name="Spiegel L."/>
            <person name="Sekhon M."/>
            <person name="Murray J."/>
            <person name="Sheet P."/>
            <person name="Cordes M."/>
            <person name="Abu-Threideh J."/>
            <person name="Stoneking T."/>
            <person name="Kalicki J."/>
            <person name="Graves T."/>
            <person name="Harmon G."/>
            <person name="Edwards J."/>
            <person name="Latreille P."/>
            <person name="Courtney L."/>
            <person name="Cloud J."/>
            <person name="Abbott A."/>
            <person name="Scott K."/>
            <person name="Johnson D."/>
            <person name="Minx P."/>
            <person name="Bentley D."/>
            <person name="Fulton B."/>
            <person name="Miller N."/>
            <person name="Greco T."/>
            <person name="Kemp K."/>
            <person name="Kramer J."/>
            <person name="Fulton L."/>
            <person name="Mardis E."/>
            <person name="Dante M."/>
            <person name="Pepin K."/>
            <person name="Hillier L.W."/>
            <person name="Nelson J."/>
            <person name="Spieth J."/>
            <person name="Ryan E."/>
            <person name="Andrews S."/>
            <person name="Geisel C."/>
            <person name="Layman D."/>
            <person name="Du H."/>
            <person name="Ali J."/>
            <person name="Berghoff A."/>
            <person name="Jones K."/>
            <person name="Drone K."/>
            <person name="Cotton M."/>
            <person name="Joshu C."/>
            <person name="Antonoiu B."/>
            <person name="Zidanic M."/>
            <person name="Strong C."/>
            <person name="Sun H."/>
            <person name="Lamar B."/>
            <person name="Yordan C."/>
            <person name="Ma P."/>
            <person name="Zhong J."/>
            <person name="Preston R."/>
            <person name="Vil D."/>
            <person name="Shekher M."/>
            <person name="Matero A."/>
            <person name="Shah R."/>
            <person name="Swaby I.K."/>
            <person name="O'Shaughnessy A."/>
            <person name="Rodriguez M."/>
            <person name="Hoffman J."/>
            <person name="Till S."/>
            <person name="Granat S."/>
            <person name="Shohdy N."/>
            <person name="Hasegawa A."/>
            <person name="Hameed A."/>
            <person name="Lodhi M."/>
            <person name="Johnson A."/>
            <person name="Chen E."/>
            <person name="Marra M.A."/>
            <person name="Martienssen R."/>
            <person name="McCombie W.R."/>
        </authorList>
    </citation>
    <scope>NUCLEOTIDE SEQUENCE [LARGE SCALE GENOMIC DNA]</scope>
    <source>
        <strain>cv. Columbia</strain>
    </source>
</reference>
<reference key="3">
    <citation type="journal article" date="2017" name="Plant J.">
        <title>Araport11: a complete reannotation of the Arabidopsis thaliana reference genome.</title>
        <authorList>
            <person name="Cheng C.Y."/>
            <person name="Krishnakumar V."/>
            <person name="Chan A.P."/>
            <person name="Thibaud-Nissen F."/>
            <person name="Schobel S."/>
            <person name="Town C.D."/>
        </authorList>
    </citation>
    <scope>GENOME REANNOTATION</scope>
    <source>
        <strain>cv. Columbia</strain>
    </source>
</reference>
<reference key="4">
    <citation type="journal article" date="2003" name="Science">
        <title>Empirical analysis of transcriptional activity in the Arabidopsis genome.</title>
        <authorList>
            <person name="Yamada K."/>
            <person name="Lim J."/>
            <person name="Dale J.M."/>
            <person name="Chen H."/>
            <person name="Shinn P."/>
            <person name="Palm C.J."/>
            <person name="Southwick A.M."/>
            <person name="Wu H.C."/>
            <person name="Kim C.J."/>
            <person name="Nguyen M."/>
            <person name="Pham P.K."/>
            <person name="Cheuk R.F."/>
            <person name="Karlin-Newmann G."/>
            <person name="Liu S.X."/>
            <person name="Lam B."/>
            <person name="Sakano H."/>
            <person name="Wu T."/>
            <person name="Yu G."/>
            <person name="Miranda M."/>
            <person name="Quach H.L."/>
            <person name="Tripp M."/>
            <person name="Chang C.H."/>
            <person name="Lee J.M."/>
            <person name="Toriumi M.J."/>
            <person name="Chan M.M."/>
            <person name="Tang C.C."/>
            <person name="Onodera C.S."/>
            <person name="Deng J.M."/>
            <person name="Akiyama K."/>
            <person name="Ansari Y."/>
            <person name="Arakawa T."/>
            <person name="Banh J."/>
            <person name="Banno F."/>
            <person name="Bowser L."/>
            <person name="Brooks S.Y."/>
            <person name="Carninci P."/>
            <person name="Chao Q."/>
            <person name="Choy N."/>
            <person name="Enju A."/>
            <person name="Goldsmith A.D."/>
            <person name="Gurjal M."/>
            <person name="Hansen N.F."/>
            <person name="Hayashizaki Y."/>
            <person name="Johnson-Hopson C."/>
            <person name="Hsuan V.W."/>
            <person name="Iida K."/>
            <person name="Karnes M."/>
            <person name="Khan S."/>
            <person name="Koesema E."/>
            <person name="Ishida J."/>
            <person name="Jiang P.X."/>
            <person name="Jones T."/>
            <person name="Kawai J."/>
            <person name="Kamiya A."/>
            <person name="Meyers C."/>
            <person name="Nakajima M."/>
            <person name="Narusaka M."/>
            <person name="Seki M."/>
            <person name="Sakurai T."/>
            <person name="Satou M."/>
            <person name="Tamse R."/>
            <person name="Vaysberg M."/>
            <person name="Wallender E.K."/>
            <person name="Wong C."/>
            <person name="Yamamura Y."/>
            <person name="Yuan S."/>
            <person name="Shinozaki K."/>
            <person name="Davis R.W."/>
            <person name="Theologis A."/>
            <person name="Ecker J.R."/>
        </authorList>
    </citation>
    <scope>NUCLEOTIDE SEQUENCE [LARGE SCALE MRNA]</scope>
    <source>
        <strain>cv. Columbia</strain>
    </source>
</reference>
<reference key="5">
    <citation type="journal article" date="2000" name="EMBO J.">
        <title>Structure and mechanism of activity of the cyclic phosphodiesterase of Appr&gt;p, a product of the tRNA splicing reaction.</title>
        <authorList>
            <person name="Hofmann A."/>
            <person name="Zdanov A."/>
            <person name="Genschik P."/>
            <person name="Ruvinov S."/>
            <person name="Filipowicz W."/>
            <person name="Wlodawer A."/>
        </authorList>
    </citation>
    <scope>X-RAY CRYSTALLOGRAPHY (2.5 ANGSTROMS)</scope>
</reference>
<reference key="6">
    <citation type="journal article" date="2002" name="J. Biol. Chem.">
        <title>Crystal structures of the semireduced and inhibitor-bound forms of cyclic nucleotide phosphodiesterase from Arabidopsis thaliana.</title>
        <authorList>
            <person name="Hofmann A."/>
            <person name="Grella M."/>
            <person name="Botos I."/>
            <person name="Filipowicz W."/>
            <person name="Wlodawer A."/>
        </authorList>
    </citation>
    <scope>X-RAY CRYSTALLOGRAPHY (1.8 ANGSTROMS) IN COMPLEX WITH INHIBITOR 2',3'-CYCLIC URIDINE VANADATE</scope>
</reference>
<gene>
    <name type="ordered locus">At4g18930</name>
    <name type="ORF">F13C5.100</name>
    <name type="ORF">F13C5_100</name>
</gene>
<evidence type="ECO:0000269" key="1">
    <source>
    </source>
</evidence>
<evidence type="ECO:0000303" key="2">
    <source>
    </source>
</evidence>
<evidence type="ECO:0000305" key="3"/>
<evidence type="ECO:0007829" key="4">
    <source>
        <dbReference type="PDB" id="1FSI"/>
    </source>
</evidence>
<evidence type="ECO:0007829" key="5">
    <source>
        <dbReference type="PDB" id="1JH6"/>
    </source>
</evidence>
<dbReference type="EC" id="3.1.4.37" evidence="1"/>
<dbReference type="EMBL" id="Y11650">
    <property type="protein sequence ID" value="CAA72363.1"/>
    <property type="molecule type" value="mRNA"/>
</dbReference>
<dbReference type="EMBL" id="AL021711">
    <property type="protein sequence ID" value="CAA16750.1"/>
    <property type="molecule type" value="Genomic_DNA"/>
</dbReference>
<dbReference type="EMBL" id="AL161549">
    <property type="protein sequence ID" value="CAB78895.1"/>
    <property type="molecule type" value="Genomic_DNA"/>
</dbReference>
<dbReference type="EMBL" id="CP002687">
    <property type="protein sequence ID" value="AEE84108.1"/>
    <property type="molecule type" value="Genomic_DNA"/>
</dbReference>
<dbReference type="EMBL" id="AY062822">
    <property type="protein sequence ID" value="AAL32900.1"/>
    <property type="molecule type" value="mRNA"/>
</dbReference>
<dbReference type="EMBL" id="AY081630">
    <property type="protein sequence ID" value="AAM10192.1"/>
    <property type="molecule type" value="mRNA"/>
</dbReference>
<dbReference type="PIR" id="T05030">
    <property type="entry name" value="T05030"/>
</dbReference>
<dbReference type="RefSeq" id="NP_193628.1">
    <property type="nucleotide sequence ID" value="NM_118010.5"/>
</dbReference>
<dbReference type="PDB" id="1FSI">
    <property type="method" value="X-ray"/>
    <property type="resolution" value="2.50 A"/>
    <property type="chains" value="A/B/C=1-181"/>
</dbReference>
<dbReference type="PDB" id="1JH6">
    <property type="method" value="X-ray"/>
    <property type="resolution" value="1.80 A"/>
    <property type="chains" value="A/B=1-181"/>
</dbReference>
<dbReference type="PDB" id="1JH7">
    <property type="method" value="X-ray"/>
    <property type="resolution" value="2.40 A"/>
    <property type="chains" value="A=1-181"/>
</dbReference>
<dbReference type="PDBsum" id="1FSI"/>
<dbReference type="PDBsum" id="1JH6"/>
<dbReference type="PDBsum" id="1JH7"/>
<dbReference type="SMR" id="O04147"/>
<dbReference type="FunCoup" id="O04147">
    <property type="interactions" value="25"/>
</dbReference>
<dbReference type="STRING" id="3702.O04147"/>
<dbReference type="SwissPalm" id="O04147"/>
<dbReference type="PaxDb" id="3702-AT4G18930.1"/>
<dbReference type="ProteomicsDB" id="222616"/>
<dbReference type="EnsemblPlants" id="AT4G18930.1">
    <property type="protein sequence ID" value="AT4G18930.1"/>
    <property type="gene ID" value="AT4G18930"/>
</dbReference>
<dbReference type="GeneID" id="827628"/>
<dbReference type="Gramene" id="AT4G18930.1">
    <property type="protein sequence ID" value="AT4G18930.1"/>
    <property type="gene ID" value="AT4G18930"/>
</dbReference>
<dbReference type="KEGG" id="ath:AT4G18930"/>
<dbReference type="Araport" id="AT4G18930"/>
<dbReference type="TAIR" id="AT4G18930"/>
<dbReference type="eggNOG" id="ENOG502QPX1">
    <property type="taxonomic scope" value="Eukaryota"/>
</dbReference>
<dbReference type="HOGENOM" id="CLU_081919_1_0_1"/>
<dbReference type="InParanoid" id="O04147"/>
<dbReference type="OMA" id="AVYSVWA"/>
<dbReference type="PhylomeDB" id="O04147"/>
<dbReference type="EvolutionaryTrace" id="O04147"/>
<dbReference type="PRO" id="PR:O04147"/>
<dbReference type="Proteomes" id="UP000006548">
    <property type="component" value="Chromosome 4"/>
</dbReference>
<dbReference type="ExpressionAtlas" id="O04147">
    <property type="expression patterns" value="baseline and differential"/>
</dbReference>
<dbReference type="GO" id="GO:0005737">
    <property type="term" value="C:cytoplasm"/>
    <property type="evidence" value="ECO:0000314"/>
    <property type="project" value="TAIR"/>
</dbReference>
<dbReference type="GO" id="GO:0005829">
    <property type="term" value="C:cytosol"/>
    <property type="evidence" value="ECO:0007005"/>
    <property type="project" value="TAIR"/>
</dbReference>
<dbReference type="GO" id="GO:0004112">
    <property type="term" value="F:cyclic-nucleotide phosphodiesterase activity"/>
    <property type="evidence" value="ECO:0007669"/>
    <property type="project" value="InterPro"/>
</dbReference>
<dbReference type="GO" id="GO:0006388">
    <property type="term" value="P:tRNA splicing, via endonucleolytic cleavage and ligation"/>
    <property type="evidence" value="ECO:0000304"/>
    <property type="project" value="TAIR"/>
</dbReference>
<dbReference type="FunFam" id="3.90.1140.10:FF:000007">
    <property type="entry name" value="Cyclic phosphodiesterase"/>
    <property type="match status" value="1"/>
</dbReference>
<dbReference type="Gene3D" id="3.90.1140.10">
    <property type="entry name" value="Cyclic phosphodiesterase"/>
    <property type="match status" value="1"/>
</dbReference>
<dbReference type="InterPro" id="IPR012386">
    <property type="entry name" value="Cyclic-nucl_3Pdiesterase"/>
</dbReference>
<dbReference type="InterPro" id="IPR009097">
    <property type="entry name" value="Cyclic_Pdiesterase"/>
</dbReference>
<dbReference type="PANTHER" id="PTHR28141">
    <property type="entry name" value="2',3'-CYCLIC-NUCLEOTIDE 3'-PHOSPHODIESTERASE"/>
    <property type="match status" value="1"/>
</dbReference>
<dbReference type="PANTHER" id="PTHR28141:SF1">
    <property type="entry name" value="2',3'-CYCLIC-NUCLEOTIDE 3'-PHOSPHODIESTERASE"/>
    <property type="match status" value="1"/>
</dbReference>
<dbReference type="Pfam" id="PF07823">
    <property type="entry name" value="CPDase"/>
    <property type="match status" value="1"/>
</dbReference>
<dbReference type="PIRSF" id="PIRSF017903">
    <property type="entry name" value="CPDase_plant"/>
    <property type="match status" value="1"/>
</dbReference>
<dbReference type="SUPFAM" id="SSF55144">
    <property type="entry name" value="LigT-like"/>
    <property type="match status" value="1"/>
</dbReference>
<protein>
    <recommendedName>
        <fullName evidence="2">Cyclic phosphodiesterase</fullName>
        <shortName evidence="2">CPDase</shortName>
        <ecNumber evidence="1">3.1.4.37</ecNumber>
    </recommendedName>
</protein>
<accession>O04147</accession>